<protein>
    <recommendedName>
        <fullName evidence="1">Protein-export membrane protein SecD</fullName>
    </recommendedName>
</protein>
<comment type="function">
    <text evidence="1">Involved in protein export.</text>
</comment>
<comment type="subunit">
    <text evidence="1">Part of the protein translocation apparatus. Forms a complex with SecF.</text>
</comment>
<comment type="subcellular location">
    <subcellularLocation>
        <location evidence="1">Cell membrane</location>
        <topology evidence="1">Multi-pass membrane protein</topology>
    </subcellularLocation>
</comment>
<comment type="similarity">
    <text evidence="1">Belongs to the SecD/SecF family. SecD subfamily.</text>
</comment>
<evidence type="ECO:0000255" key="1">
    <source>
        <dbReference type="HAMAP-Rule" id="MF_01463"/>
    </source>
</evidence>
<gene>
    <name evidence="1" type="primary">secD</name>
    <name type="ordered locus">MK1009</name>
</gene>
<proteinExistence type="inferred from homology"/>
<feature type="chain" id="PRO_0000412687" description="Protein-export membrane protein SecD">
    <location>
        <begin position="1"/>
        <end position="403"/>
    </location>
</feature>
<feature type="transmembrane region" description="Helical" evidence="1">
    <location>
        <begin position="13"/>
        <end position="33"/>
    </location>
</feature>
<feature type="transmembrane region" description="Helical" evidence="1">
    <location>
        <begin position="245"/>
        <end position="265"/>
    </location>
</feature>
<feature type="transmembrane region" description="Helical" evidence="1">
    <location>
        <begin position="285"/>
        <end position="305"/>
    </location>
</feature>
<feature type="transmembrane region" description="Helical" evidence="1">
    <location>
        <begin position="306"/>
        <end position="326"/>
    </location>
</feature>
<feature type="transmembrane region" description="Helical" evidence="1">
    <location>
        <begin position="347"/>
        <end position="367"/>
    </location>
</feature>
<feature type="transmembrane region" description="Helical" evidence="1">
    <location>
        <begin position="368"/>
        <end position="388"/>
    </location>
</feature>
<sequence>MSGLGWMKENWRLLVITAVWIVAATSLAVKGVNLGLELKGGTMVIAKTDHPVSKKEMDQTVTVLESRLSTFGFKGIKIQPVGRDHIIVMLPGTPPKEAVELITKPGRFEAKYKGKTVITGQDIESVESPRIERVEGGYQWSVPFRLTAEGARKFAEVAKNAPGQPIDMYLDNKKVSSPRISEDLAMAAASGHMEREIEIVGGAKTKEQAEREAKEIMAVLRSGQLPAKLVPEGVYSVSATLGQNFLKMAMIAGAIAFAAVSVIIALRYRDIRISGPILFTGSSEVVFLIGLASLTGFTIDLPALAGIILSIGSGVDDLIVITDEIVRGERRKEEVTLRQRIKRAFSVVLASFATLAAAMAVLFVAGMGLLKGFAIMTIAGAFYGVVITRPVYADLLKKILGTE</sequence>
<organism>
    <name type="scientific">Methanopyrus kandleri (strain AV19 / DSM 6324 / JCM 9639 / NBRC 100938)</name>
    <dbReference type="NCBI Taxonomy" id="190192"/>
    <lineage>
        <taxon>Archaea</taxon>
        <taxon>Methanobacteriati</taxon>
        <taxon>Methanobacteriota</taxon>
        <taxon>Methanomada group</taxon>
        <taxon>Methanopyri</taxon>
        <taxon>Methanopyrales</taxon>
        <taxon>Methanopyraceae</taxon>
        <taxon>Methanopyrus</taxon>
    </lineage>
</organism>
<reference key="1">
    <citation type="journal article" date="2002" name="Proc. Natl. Acad. Sci. U.S.A.">
        <title>The complete genome of hyperthermophile Methanopyrus kandleri AV19 and monophyly of archaeal methanogens.</title>
        <authorList>
            <person name="Slesarev A.I."/>
            <person name="Mezhevaya K.V."/>
            <person name="Makarova K.S."/>
            <person name="Polushin N.N."/>
            <person name="Shcherbinina O.V."/>
            <person name="Shakhova V.V."/>
            <person name="Belova G.I."/>
            <person name="Aravind L."/>
            <person name="Natale D.A."/>
            <person name="Rogozin I.B."/>
            <person name="Tatusov R.L."/>
            <person name="Wolf Y.I."/>
            <person name="Stetter K.O."/>
            <person name="Malykh A.G."/>
            <person name="Koonin E.V."/>
            <person name="Kozyavkin S.A."/>
        </authorList>
    </citation>
    <scope>NUCLEOTIDE SEQUENCE [LARGE SCALE GENOMIC DNA]</scope>
    <source>
        <strain>AV19 / DSM 6324 / JCM 9639 / NBRC 100938</strain>
    </source>
</reference>
<name>SECD_METKA</name>
<dbReference type="EMBL" id="AE009439">
    <property type="protein sequence ID" value="AAM02222.1"/>
    <property type="molecule type" value="Genomic_DNA"/>
</dbReference>
<dbReference type="RefSeq" id="WP_011019377.1">
    <property type="nucleotide sequence ID" value="NC_003551.1"/>
</dbReference>
<dbReference type="SMR" id="Q8TWM4"/>
<dbReference type="FunCoup" id="Q8TWM4">
    <property type="interactions" value="8"/>
</dbReference>
<dbReference type="STRING" id="190192.MK1009"/>
<dbReference type="PaxDb" id="190192-MK1009"/>
<dbReference type="EnsemblBacteria" id="AAM02222">
    <property type="protein sequence ID" value="AAM02222"/>
    <property type="gene ID" value="MK1009"/>
</dbReference>
<dbReference type="GeneID" id="1477110"/>
<dbReference type="KEGG" id="mka:MK1009"/>
<dbReference type="HOGENOM" id="CLU_007894_5_1_2"/>
<dbReference type="InParanoid" id="Q8TWM4"/>
<dbReference type="OrthoDB" id="146638at2157"/>
<dbReference type="Proteomes" id="UP000001826">
    <property type="component" value="Chromosome"/>
</dbReference>
<dbReference type="GO" id="GO:0005886">
    <property type="term" value="C:plasma membrane"/>
    <property type="evidence" value="ECO:0007669"/>
    <property type="project" value="UniProtKB-SubCell"/>
</dbReference>
<dbReference type="GO" id="GO:0065002">
    <property type="term" value="P:intracellular protein transmembrane transport"/>
    <property type="evidence" value="ECO:0007669"/>
    <property type="project" value="UniProtKB-UniRule"/>
</dbReference>
<dbReference type="GO" id="GO:0006605">
    <property type="term" value="P:protein targeting"/>
    <property type="evidence" value="ECO:0007669"/>
    <property type="project" value="UniProtKB-UniRule"/>
</dbReference>
<dbReference type="Gene3D" id="3.30.70.3220">
    <property type="match status" value="1"/>
</dbReference>
<dbReference type="Gene3D" id="1.20.1640.10">
    <property type="entry name" value="Multidrug efflux transporter AcrB transmembrane domain"/>
    <property type="match status" value="1"/>
</dbReference>
<dbReference type="HAMAP" id="MF_01463_A">
    <property type="entry name" value="SecD_A"/>
    <property type="match status" value="1"/>
</dbReference>
<dbReference type="InterPro" id="IPR022813">
    <property type="entry name" value="SecD/SecF_arch_bac"/>
</dbReference>
<dbReference type="InterPro" id="IPR022646">
    <property type="entry name" value="SecD/SecF_CS"/>
</dbReference>
<dbReference type="InterPro" id="IPR024912">
    <property type="entry name" value="SecD_arc"/>
</dbReference>
<dbReference type="InterPro" id="IPR048634">
    <property type="entry name" value="SecD_SecF_C"/>
</dbReference>
<dbReference type="InterPro" id="IPR054384">
    <property type="entry name" value="SecDF_P1_head"/>
</dbReference>
<dbReference type="NCBIfam" id="NF006218">
    <property type="entry name" value="PRK08343.1-4"/>
    <property type="match status" value="1"/>
</dbReference>
<dbReference type="PANTHER" id="PTHR30081:SF1">
    <property type="entry name" value="PROTEIN TRANSLOCASE SUBUNIT SECD"/>
    <property type="match status" value="1"/>
</dbReference>
<dbReference type="PANTHER" id="PTHR30081">
    <property type="entry name" value="PROTEIN-EXPORT MEMBRANE PROTEIN SEC"/>
    <property type="match status" value="1"/>
</dbReference>
<dbReference type="Pfam" id="PF07549">
    <property type="entry name" value="Sec_GG"/>
    <property type="match status" value="1"/>
</dbReference>
<dbReference type="Pfam" id="PF02355">
    <property type="entry name" value="SecD_SecF_C"/>
    <property type="match status" value="1"/>
</dbReference>
<dbReference type="Pfam" id="PF22599">
    <property type="entry name" value="SecDF_P1_head"/>
    <property type="match status" value="1"/>
</dbReference>
<dbReference type="SUPFAM" id="SSF82866">
    <property type="entry name" value="Multidrug efflux transporter AcrB transmembrane domain"/>
    <property type="match status" value="1"/>
</dbReference>
<accession>Q8TWM4</accession>
<keyword id="KW-1003">Cell membrane</keyword>
<keyword id="KW-0472">Membrane</keyword>
<keyword id="KW-0653">Protein transport</keyword>
<keyword id="KW-1185">Reference proteome</keyword>
<keyword id="KW-0811">Translocation</keyword>
<keyword id="KW-0812">Transmembrane</keyword>
<keyword id="KW-1133">Transmembrane helix</keyword>
<keyword id="KW-0813">Transport</keyword>